<proteinExistence type="inferred from homology"/>
<keyword id="KW-0524">Neurogenesis</keyword>
<keyword id="KW-0770">Synapse</keyword>
<keyword id="KW-0833">Ubl conjugation pathway</keyword>
<comment type="function">
    <text evidence="1">Required in the presynaptic motoneuron to down-regulate the levels of wnd and restrain synaptic terminal growth at the neuromuscular junction (NMJ).</text>
</comment>
<comment type="pathway">
    <text evidence="2">Protein modification; protein ubiquitination.</text>
</comment>
<comment type="subunit">
    <text evidence="2">Component of an E3 ubiquitin ligase complex composed of hiw and Fsn.</text>
</comment>
<comment type="subcellular location">
    <subcellularLocation>
        <location evidence="2">Synapse</location>
    </subcellularLocation>
</comment>
<comment type="similarity">
    <text evidence="5">Belongs to the FBXO45/Fsn family.</text>
</comment>
<protein>
    <recommendedName>
        <fullName evidence="2">F-box/SPRY domain-containing protein 1</fullName>
    </recommendedName>
</protein>
<dbReference type="EMBL" id="CH954179">
    <property type="protein sequence ID" value="EDV56193.1"/>
    <property type="molecule type" value="Genomic_DNA"/>
</dbReference>
<dbReference type="RefSeq" id="XP_001975793.1">
    <property type="nucleotide sequence ID" value="XM_001975757.2"/>
</dbReference>
<dbReference type="SMR" id="B3NRP1"/>
<dbReference type="EnsemblMetazoa" id="FBtr0142565">
    <property type="protein sequence ID" value="FBpp0141057"/>
    <property type="gene ID" value="FBgn0114682"/>
</dbReference>
<dbReference type="EnsemblMetazoa" id="XM_015156989.2">
    <property type="protein sequence ID" value="XP_015012475.2"/>
    <property type="gene ID" value="LOC6549364"/>
</dbReference>
<dbReference type="eggNOG" id="KOG3953">
    <property type="taxonomic scope" value="Eukaryota"/>
</dbReference>
<dbReference type="HOGENOM" id="CLU_046756_1_0_1"/>
<dbReference type="OMA" id="ATKRASM"/>
<dbReference type="OrthoDB" id="2398163at2759"/>
<dbReference type="PhylomeDB" id="B3NRP1"/>
<dbReference type="UniPathway" id="UPA00143"/>
<dbReference type="Proteomes" id="UP000008711">
    <property type="component" value="Unassembled WGS sequence"/>
</dbReference>
<dbReference type="GO" id="GO:0005938">
    <property type="term" value="C:cell cortex"/>
    <property type="evidence" value="ECO:0007669"/>
    <property type="project" value="EnsemblMetazoa"/>
</dbReference>
<dbReference type="GO" id="GO:0031594">
    <property type="term" value="C:neuromuscular junction"/>
    <property type="evidence" value="ECO:0000250"/>
    <property type="project" value="UniProtKB"/>
</dbReference>
<dbReference type="GO" id="GO:0005634">
    <property type="term" value="C:nucleus"/>
    <property type="evidence" value="ECO:0007669"/>
    <property type="project" value="EnsemblMetazoa"/>
</dbReference>
<dbReference type="GO" id="GO:0045495">
    <property type="term" value="C:pole plasm"/>
    <property type="evidence" value="ECO:0007669"/>
    <property type="project" value="EnsemblMetazoa"/>
</dbReference>
<dbReference type="GO" id="GO:0019005">
    <property type="term" value="C:SCF ubiquitin ligase complex"/>
    <property type="evidence" value="ECO:0007669"/>
    <property type="project" value="EnsemblMetazoa"/>
</dbReference>
<dbReference type="GO" id="GO:0010629">
    <property type="term" value="P:negative regulation of gene expression"/>
    <property type="evidence" value="ECO:0007669"/>
    <property type="project" value="EnsemblMetazoa"/>
</dbReference>
<dbReference type="GO" id="GO:0045886">
    <property type="term" value="P:negative regulation of synaptic assembly at neuromuscular junction"/>
    <property type="evidence" value="ECO:0000250"/>
    <property type="project" value="UniProtKB"/>
</dbReference>
<dbReference type="GO" id="GO:0007274">
    <property type="term" value="P:neuromuscular synaptic transmission"/>
    <property type="evidence" value="ECO:0000250"/>
    <property type="project" value="UniProtKB"/>
</dbReference>
<dbReference type="GO" id="GO:0045732">
    <property type="term" value="P:positive regulation of protein catabolic process"/>
    <property type="evidence" value="ECO:0007669"/>
    <property type="project" value="EnsemblMetazoa"/>
</dbReference>
<dbReference type="GO" id="GO:0043161">
    <property type="term" value="P:proteasome-mediated ubiquitin-dependent protein catabolic process"/>
    <property type="evidence" value="ECO:0007669"/>
    <property type="project" value="TreeGrafter"/>
</dbReference>
<dbReference type="GO" id="GO:0016567">
    <property type="term" value="P:protein ubiquitination"/>
    <property type="evidence" value="ECO:0007669"/>
    <property type="project" value="UniProtKB-UniPathway"/>
</dbReference>
<dbReference type="GO" id="GO:0060386">
    <property type="term" value="P:synapse assembly involved in innervation"/>
    <property type="evidence" value="ECO:0007669"/>
    <property type="project" value="TreeGrafter"/>
</dbReference>
<dbReference type="CDD" id="cd22111">
    <property type="entry name" value="F-box_FBXO45"/>
    <property type="match status" value="1"/>
</dbReference>
<dbReference type="CDD" id="cd12907">
    <property type="entry name" value="SPRY_Fbox"/>
    <property type="match status" value="1"/>
</dbReference>
<dbReference type="FunFam" id="1.20.1280.50:FF:000140">
    <property type="entry name" value="F-box/SPRY domain-containing protein 1"/>
    <property type="match status" value="1"/>
</dbReference>
<dbReference type="FunFam" id="2.60.120.920:FF:000017">
    <property type="entry name" value="F-box/SPRY domain-containing protein 1"/>
    <property type="match status" value="1"/>
</dbReference>
<dbReference type="Gene3D" id="1.20.1280.50">
    <property type="match status" value="1"/>
</dbReference>
<dbReference type="Gene3D" id="2.60.120.920">
    <property type="match status" value="1"/>
</dbReference>
<dbReference type="InterPro" id="IPR001870">
    <property type="entry name" value="B30.2/SPRY"/>
</dbReference>
<dbReference type="InterPro" id="IPR043136">
    <property type="entry name" value="B30.2/SPRY_sf"/>
</dbReference>
<dbReference type="InterPro" id="IPR013320">
    <property type="entry name" value="ConA-like_dom_sf"/>
</dbReference>
<dbReference type="InterPro" id="IPR036047">
    <property type="entry name" value="F-box-like_dom_sf"/>
</dbReference>
<dbReference type="InterPro" id="IPR001810">
    <property type="entry name" value="F-box_dom"/>
</dbReference>
<dbReference type="InterPro" id="IPR050672">
    <property type="entry name" value="FBXO45-Fsn/SPSB_families"/>
</dbReference>
<dbReference type="InterPro" id="IPR003877">
    <property type="entry name" value="SPRY_dom"/>
</dbReference>
<dbReference type="InterPro" id="IPR035784">
    <property type="entry name" value="SPRY_FBXO45"/>
</dbReference>
<dbReference type="PANTHER" id="PTHR12245:SF7">
    <property type="entry name" value="F-BOX_SPRY DOMAIN-CONTAINING PROTEIN 1"/>
    <property type="match status" value="1"/>
</dbReference>
<dbReference type="PANTHER" id="PTHR12245">
    <property type="entry name" value="SPRY DOMAIN CONTAINING SOCS BOX PROTEIN"/>
    <property type="match status" value="1"/>
</dbReference>
<dbReference type="Pfam" id="PF12937">
    <property type="entry name" value="F-box-like"/>
    <property type="match status" value="1"/>
</dbReference>
<dbReference type="Pfam" id="PF00622">
    <property type="entry name" value="SPRY"/>
    <property type="match status" value="1"/>
</dbReference>
<dbReference type="SMART" id="SM00449">
    <property type="entry name" value="SPRY"/>
    <property type="match status" value="1"/>
</dbReference>
<dbReference type="SUPFAM" id="SSF49899">
    <property type="entry name" value="Concanavalin A-like lectins/glucanases"/>
    <property type="match status" value="1"/>
</dbReference>
<dbReference type="SUPFAM" id="SSF81383">
    <property type="entry name" value="F-box domain"/>
    <property type="match status" value="1"/>
</dbReference>
<dbReference type="PROSITE" id="PS50188">
    <property type="entry name" value="B302_SPRY"/>
    <property type="match status" value="1"/>
</dbReference>
<organism>
    <name type="scientific">Drosophila erecta</name>
    <name type="common">Fruit fly</name>
    <dbReference type="NCBI Taxonomy" id="7220"/>
    <lineage>
        <taxon>Eukaryota</taxon>
        <taxon>Metazoa</taxon>
        <taxon>Ecdysozoa</taxon>
        <taxon>Arthropoda</taxon>
        <taxon>Hexapoda</taxon>
        <taxon>Insecta</taxon>
        <taxon>Pterygota</taxon>
        <taxon>Neoptera</taxon>
        <taxon>Endopterygota</taxon>
        <taxon>Diptera</taxon>
        <taxon>Brachycera</taxon>
        <taxon>Muscomorpha</taxon>
        <taxon>Ephydroidea</taxon>
        <taxon>Drosophilidae</taxon>
        <taxon>Drosophila</taxon>
        <taxon>Sophophora</taxon>
    </lineage>
</organism>
<name>FBSP1_DROER</name>
<reference evidence="6" key="1">
    <citation type="journal article" date="2007" name="Nature">
        <title>Evolution of genes and genomes on the Drosophila phylogeny.</title>
        <authorList>
            <consortium name="Drosophila 12 genomes consortium"/>
        </authorList>
    </citation>
    <scope>NUCLEOTIDE SEQUENCE [LARGE SCALE GENOMIC DNA]</scope>
    <source>
        <strain evidence="6">Tucson 14021-0224.01</strain>
    </source>
</reference>
<feature type="chain" id="PRO_0000383311" description="F-box/SPRY domain-containing protein 1">
    <location>
        <begin position="1"/>
        <end position="255"/>
    </location>
</feature>
<feature type="domain" description="F-box" evidence="3">
    <location>
        <begin position="3"/>
        <end position="51"/>
    </location>
</feature>
<feature type="domain" description="B30.2/SPRY" evidence="4">
    <location>
        <begin position="61"/>
        <end position="253"/>
    </location>
</feature>
<accession>B3NRP1</accession>
<evidence type="ECO:0000250" key="1"/>
<evidence type="ECO:0000250" key="2">
    <source>
        <dbReference type="UniProtKB" id="Q9V6L9"/>
    </source>
</evidence>
<evidence type="ECO:0000255" key="3"/>
<evidence type="ECO:0000255" key="4">
    <source>
        <dbReference type="PROSITE-ProRule" id="PRU00548"/>
    </source>
</evidence>
<evidence type="ECO:0000305" key="5"/>
<evidence type="ECO:0000312" key="6">
    <source>
        <dbReference type="EMBL" id="EDV56193.1"/>
    </source>
</evidence>
<sequence>MVDPVAALCNYNVLEVIFSYLELEDLSHCSQVCKSWYHFLNDENSDVWRWHCLNKLPKEALKSDLLSSVSTYKTKLRAYFHAWSPNDCSRNVYIKPNGFTLHRNPVAQSTDAARGKIGFRHGRHTWEVIWEGPLGTVAVIGISTKEAALQCHGYVALLGSDDQSWGWNLVENHLLHNGDMQGSYPLLNNAPKYQVGERIRVILDCEDNTLSFEKNYEFLGVAFRGLPDKKLYPTVSAVYGNTEVSMVYLGTPLDG</sequence>
<gene>
    <name evidence="2" type="primary">Fsn</name>
    <name type="ORF">GG22511</name>
</gene>